<protein>
    <recommendedName>
        <fullName evidence="6">Small ribosomal subunit protein uS4</fullName>
    </recommendedName>
    <alternativeName>
        <fullName evidence="2">40S ribosomal protein S9</fullName>
    </alternativeName>
</protein>
<gene>
    <name type="primary">RpS9</name>
    <name type="ORF">GE21228</name>
</gene>
<proteinExistence type="evidence at transcript level"/>
<keyword id="KW-0963">Cytoplasm</keyword>
<keyword id="KW-0539">Nucleus</keyword>
<keyword id="KW-0687">Ribonucleoprotein</keyword>
<keyword id="KW-0689">Ribosomal protein</keyword>
<keyword id="KW-0694">RNA-binding</keyword>
<keyword id="KW-0699">rRNA-binding</keyword>
<reference evidence="8" key="1">
    <citation type="journal article" date="2007" name="Nature">
        <title>Evolution of genes and genomes on the Drosophila phylogeny.</title>
        <authorList>
            <consortium name="Drosophila 12 genomes consortium"/>
        </authorList>
    </citation>
    <scope>NUCLEOTIDE SEQUENCE [LARGE SCALE GENOMIC DNA]</scope>
    <source>
        <strain evidence="8">Tai18E2 / Tucson 14021-0261.01</strain>
    </source>
</reference>
<reference evidence="7" key="2">
    <citation type="journal article" date="2003" name="Genome Res.">
        <title>An evolutionary analysis of orphan genes in Drosophila.</title>
        <authorList>
            <person name="Domazet-Loso T."/>
            <person name="Tautz D."/>
        </authorList>
    </citation>
    <scope>NUCLEOTIDE SEQUENCE [MRNA] OF 1-191</scope>
</reference>
<accession>B4PEU8</accession>
<feature type="chain" id="PRO_0000437459" description="Small ribosomal subunit protein uS4">
    <location>
        <begin position="1"/>
        <end position="195"/>
    </location>
</feature>
<feature type="domain" description="S4 RNA-binding" evidence="3">
    <location>
        <begin position="109"/>
        <end position="183"/>
    </location>
</feature>
<feature type="region of interest" description="Disordered" evidence="5">
    <location>
        <begin position="165"/>
        <end position="195"/>
    </location>
</feature>
<sequence>MVNGRIPSVFSKTYVTPRRPYEKARLDQELKIIGEYGLRNKREVWRVKYALAKIRKAARELLTLDEKDEKRLFQGNALLRRLVRIGVLDESRMKLDYVLGLKIEDFLERRLQTQVFKLGLAKSIHHARVLIRQRHIRVRKQVVNIPSFVVRLDSQKHIDFSLKSPFGGGRPGRVKRKNLKKNQGGGGGAAEEEED</sequence>
<name>RS9_DROYA</name>
<organism evidence="8">
    <name type="scientific">Drosophila yakuba</name>
    <name type="common">Fruit fly</name>
    <dbReference type="NCBI Taxonomy" id="7245"/>
    <lineage>
        <taxon>Eukaryota</taxon>
        <taxon>Metazoa</taxon>
        <taxon>Ecdysozoa</taxon>
        <taxon>Arthropoda</taxon>
        <taxon>Hexapoda</taxon>
        <taxon>Insecta</taxon>
        <taxon>Pterygota</taxon>
        <taxon>Neoptera</taxon>
        <taxon>Endopterygota</taxon>
        <taxon>Diptera</taxon>
        <taxon>Brachycera</taxon>
        <taxon>Muscomorpha</taxon>
        <taxon>Ephydroidea</taxon>
        <taxon>Drosophilidae</taxon>
        <taxon>Drosophila</taxon>
        <taxon>Sophophora</taxon>
    </lineage>
</organism>
<evidence type="ECO:0000250" key="1">
    <source>
        <dbReference type="UniProtKB" id="P46781"/>
    </source>
</evidence>
<evidence type="ECO:0000250" key="2">
    <source>
        <dbReference type="UniProtKB" id="P55935"/>
    </source>
</evidence>
<evidence type="ECO:0000255" key="3">
    <source>
        <dbReference type="PROSITE-ProRule" id="PRU00182"/>
    </source>
</evidence>
<evidence type="ECO:0000255" key="4">
    <source>
        <dbReference type="RuleBase" id="RU003699"/>
    </source>
</evidence>
<evidence type="ECO:0000256" key="5">
    <source>
        <dbReference type="SAM" id="MobiDB-lite"/>
    </source>
</evidence>
<evidence type="ECO:0000305" key="6"/>
<evidence type="ECO:0000312" key="7">
    <source>
        <dbReference type="EMBL" id="AAR09821.1"/>
    </source>
</evidence>
<evidence type="ECO:0000312" key="8">
    <source>
        <dbReference type="Proteomes" id="UP000002282"/>
    </source>
</evidence>
<dbReference type="EMBL" id="CM000159">
    <property type="protein sequence ID" value="EDW93003.1"/>
    <property type="molecule type" value="Genomic_DNA"/>
</dbReference>
<dbReference type="EMBL" id="AY231798">
    <property type="protein sequence ID" value="AAR09821.1"/>
    <property type="molecule type" value="mRNA"/>
</dbReference>
<dbReference type="SMR" id="B4PEU8"/>
<dbReference type="EnsemblMetazoa" id="FBtr0267746">
    <property type="protein sequence ID" value="FBpp0266238"/>
    <property type="gene ID" value="FBgn0068046"/>
</dbReference>
<dbReference type="EnsemblMetazoa" id="XM_002093255.3">
    <property type="protein sequence ID" value="XP_002093291.1"/>
    <property type="gene ID" value="LOC6532545"/>
</dbReference>
<dbReference type="GeneID" id="6532545"/>
<dbReference type="KEGG" id="dya:Dyak_GE21228"/>
<dbReference type="CTD" id="6203"/>
<dbReference type="eggNOG" id="KOG3301">
    <property type="taxonomic scope" value="Eukaryota"/>
</dbReference>
<dbReference type="HOGENOM" id="CLU_089738_0_0_1"/>
<dbReference type="OMA" id="RQFITHG"/>
<dbReference type="OrthoDB" id="1697570at2759"/>
<dbReference type="PhylomeDB" id="B4PEU8"/>
<dbReference type="ChiTaRS" id="RpS9">
    <property type="organism name" value="fly"/>
</dbReference>
<dbReference type="Proteomes" id="UP000002282">
    <property type="component" value="Chromosome 3L"/>
</dbReference>
<dbReference type="GO" id="GO:0022627">
    <property type="term" value="C:cytosolic small ribosomal subunit"/>
    <property type="evidence" value="ECO:0007669"/>
    <property type="project" value="TreeGrafter"/>
</dbReference>
<dbReference type="GO" id="GO:0000228">
    <property type="term" value="C:nuclear chromosome"/>
    <property type="evidence" value="ECO:0007669"/>
    <property type="project" value="EnsemblMetazoa"/>
</dbReference>
<dbReference type="GO" id="GO:0005730">
    <property type="term" value="C:nucleolus"/>
    <property type="evidence" value="ECO:0007669"/>
    <property type="project" value="UniProtKB-SubCell"/>
</dbReference>
<dbReference type="GO" id="GO:0032040">
    <property type="term" value="C:small-subunit processome"/>
    <property type="evidence" value="ECO:0000250"/>
    <property type="project" value="UniProtKB"/>
</dbReference>
<dbReference type="GO" id="GO:0019843">
    <property type="term" value="F:rRNA binding"/>
    <property type="evidence" value="ECO:0007669"/>
    <property type="project" value="UniProtKB-KW"/>
</dbReference>
<dbReference type="GO" id="GO:0003735">
    <property type="term" value="F:structural constituent of ribosome"/>
    <property type="evidence" value="ECO:0007669"/>
    <property type="project" value="EnsemblMetazoa"/>
</dbReference>
<dbReference type="GO" id="GO:0042274">
    <property type="term" value="P:ribosomal small subunit biogenesis"/>
    <property type="evidence" value="ECO:0000250"/>
    <property type="project" value="UniProtKB"/>
</dbReference>
<dbReference type="GO" id="GO:0006412">
    <property type="term" value="P:translation"/>
    <property type="evidence" value="ECO:0007669"/>
    <property type="project" value="InterPro"/>
</dbReference>
<dbReference type="CDD" id="cd00165">
    <property type="entry name" value="S4"/>
    <property type="match status" value="1"/>
</dbReference>
<dbReference type="FunFam" id="3.10.290.10:FF:000021">
    <property type="entry name" value="40S ribosomal protein S9"/>
    <property type="match status" value="1"/>
</dbReference>
<dbReference type="Gene3D" id="3.10.290.10">
    <property type="entry name" value="RNA-binding S4 domain"/>
    <property type="match status" value="1"/>
</dbReference>
<dbReference type="InterPro" id="IPR022801">
    <property type="entry name" value="Ribosomal_uS4"/>
</dbReference>
<dbReference type="InterPro" id="IPR018079">
    <property type="entry name" value="Ribosomal_uS4_CS"/>
</dbReference>
<dbReference type="InterPro" id="IPR005710">
    <property type="entry name" value="Ribosomal_uS4_euk/arc"/>
</dbReference>
<dbReference type="InterPro" id="IPR001912">
    <property type="entry name" value="Ribosomal_uS4_N"/>
</dbReference>
<dbReference type="InterPro" id="IPR002942">
    <property type="entry name" value="S4_RNA-bd"/>
</dbReference>
<dbReference type="InterPro" id="IPR036986">
    <property type="entry name" value="S4_RNA-bd_sf"/>
</dbReference>
<dbReference type="NCBIfam" id="NF003139">
    <property type="entry name" value="PRK04051.1"/>
    <property type="match status" value="1"/>
</dbReference>
<dbReference type="NCBIfam" id="TIGR01018">
    <property type="entry name" value="uS4_arch"/>
    <property type="match status" value="1"/>
</dbReference>
<dbReference type="PANTHER" id="PTHR11831">
    <property type="entry name" value="30S 40S RIBOSOMAL PROTEIN"/>
    <property type="match status" value="1"/>
</dbReference>
<dbReference type="PANTHER" id="PTHR11831:SF5">
    <property type="entry name" value="40S RIBOSOMAL PROTEIN S9"/>
    <property type="match status" value="1"/>
</dbReference>
<dbReference type="Pfam" id="PF00163">
    <property type="entry name" value="Ribosomal_S4"/>
    <property type="match status" value="1"/>
</dbReference>
<dbReference type="Pfam" id="PF01479">
    <property type="entry name" value="S4"/>
    <property type="match status" value="1"/>
</dbReference>
<dbReference type="SMART" id="SM01390">
    <property type="entry name" value="Ribosomal_S4"/>
    <property type="match status" value="1"/>
</dbReference>
<dbReference type="SMART" id="SM00363">
    <property type="entry name" value="S4"/>
    <property type="match status" value="1"/>
</dbReference>
<dbReference type="SUPFAM" id="SSF55174">
    <property type="entry name" value="Alpha-L RNA-binding motif"/>
    <property type="match status" value="1"/>
</dbReference>
<dbReference type="PROSITE" id="PS00632">
    <property type="entry name" value="RIBOSOMAL_S4"/>
    <property type="match status" value="1"/>
</dbReference>
<dbReference type="PROSITE" id="PS50889">
    <property type="entry name" value="S4"/>
    <property type="match status" value="1"/>
</dbReference>
<comment type="function">
    <text evidence="1">Component of the small ribosomal subunit. The ribosome is a large ribonucleoprotein complex responsible for the synthesis of proteins in the cell. Part of the small subunit (SSU) processome, first precursor of the small eukaryotic ribosomal subunit. During the assembly of the SSU processome in the nucleolus, many ribosome biogenesis factors, an RNA chaperone and ribosomal proteins associate with the nascent pre-rRNA and work in concert to generate RNA folding, modifications, rearrangements and cleavage as well as targeted degradation of pre-ribosomal RNA by the RNA exosome.</text>
</comment>
<comment type="subunit">
    <text evidence="1">Component of the small ribosomal subunit. Part of the small subunit (SSU) processome, composed of more than 70 proteins and the RNA chaperone small nucleolar RNA (snoRNA) U3.</text>
</comment>
<comment type="subcellular location">
    <subcellularLocation>
        <location evidence="1">Cytoplasm</location>
    </subcellularLocation>
    <subcellularLocation>
        <location evidence="1">Nucleus</location>
        <location evidence="1">Nucleolus</location>
    </subcellularLocation>
    <text evidence="1">Localized in cytoplasmic mRNP granules containing untranslated mRNAs.</text>
</comment>
<comment type="similarity">
    <text evidence="4">Belongs to the universal ribosomal protein uS4 family.</text>
</comment>